<name>MSP3_GLORO</name>
<comment type="function">
    <text evidence="1">Central component in molecular interactions underlying sperm crawling. Forms an extensive filament system that extends from sperm villipoda, along the leading edge of the pseudopod (By similarity).</text>
</comment>
<comment type="subcellular location">
    <subcellularLocation>
        <location evidence="1">Cell projection</location>
        <location evidence="1">Pseudopodium</location>
    </subcellularLocation>
    <subcellularLocation>
        <location evidence="1">Cytoplasm</location>
        <location evidence="1">Cytoskeleton</location>
    </subcellularLocation>
</comment>
<comment type="tissue specificity">
    <text>Sperm.</text>
</comment>
<evidence type="ECO:0000250" key="1"/>
<evidence type="ECO:0000255" key="2">
    <source>
        <dbReference type="PROSITE-ProRule" id="PRU00132"/>
    </source>
</evidence>
<reference key="1">
    <citation type="submission" date="1993-11" db="EMBL/GenBank/DDBJ databases">
        <authorList>
            <person name="Novitski C.E."/>
            <person name="Brown S."/>
            <person name="Chen R."/>
            <person name="Corner A.S."/>
            <person name="Atkinson H.J."/>
            <person name="McPherson M.J."/>
        </authorList>
    </citation>
    <scope>NUCLEOTIDE SEQUENCE [GENOMIC DNA]</scope>
    <source>
        <strain>Ro1 / Mierenbos</strain>
    </source>
</reference>
<feature type="initiator methionine" description="Removed" evidence="1">
    <location>
        <position position="1"/>
    </location>
</feature>
<feature type="chain" id="PRO_0000213456" description="Major sperm protein 3">
    <location>
        <begin position="2"/>
        <end position="126"/>
    </location>
</feature>
<feature type="domain" description="MSP" evidence="2">
    <location>
        <begin position="8"/>
        <end position="125"/>
    </location>
</feature>
<feature type="modified residue" description="N-acetylalanine" evidence="1">
    <location>
        <position position="2"/>
    </location>
</feature>
<keyword id="KW-0007">Acetylation</keyword>
<keyword id="KW-0966">Cell projection</keyword>
<keyword id="KW-0963">Cytoplasm</keyword>
<keyword id="KW-0206">Cytoskeleton</keyword>
<keyword id="KW-1185">Reference proteome</keyword>
<gene>
    <name type="primary">MSP-3</name>
</gene>
<proteinExistence type="evidence at transcript level"/>
<sequence length="126" mass="13975">MAQLPPEDIATMPAQKVVFNAPFDNKATYYVRIINPGTKRIGFAFKTTKPKRINMNPPNGVLGPKESVNVAISCDAFDPSSEDSKGDRVTVEWCNTPDPAAAAFKLEWFQGDGMVRRKNLPIEYNV</sequence>
<accession>P53023</accession>
<organism>
    <name type="scientific">Globodera rostochiensis</name>
    <name type="common">Golden nematode worm</name>
    <name type="synonym">Heterodera rostochiensis</name>
    <dbReference type="NCBI Taxonomy" id="31243"/>
    <lineage>
        <taxon>Eukaryota</taxon>
        <taxon>Metazoa</taxon>
        <taxon>Ecdysozoa</taxon>
        <taxon>Nematoda</taxon>
        <taxon>Chromadorea</taxon>
        <taxon>Rhabditida</taxon>
        <taxon>Tylenchina</taxon>
        <taxon>Tylenchomorpha</taxon>
        <taxon>Tylenchoidea</taxon>
        <taxon>Heteroderidae</taxon>
        <taxon>Heteroderinae</taxon>
        <taxon>Globodera</taxon>
    </lineage>
</organism>
<protein>
    <recommendedName>
        <fullName>Major sperm protein 3</fullName>
    </recommendedName>
</protein>
<dbReference type="EMBL" id="L24501">
    <property type="protein sequence ID" value="AAA29148.1"/>
    <property type="molecule type" value="Genomic_DNA"/>
</dbReference>
<dbReference type="SMR" id="P53023"/>
<dbReference type="Proteomes" id="UP000887572">
    <property type="component" value="Unplaced"/>
</dbReference>
<dbReference type="GO" id="GO:0005737">
    <property type="term" value="C:cytoplasm"/>
    <property type="evidence" value="ECO:0007669"/>
    <property type="project" value="UniProtKB-KW"/>
</dbReference>
<dbReference type="GO" id="GO:0005856">
    <property type="term" value="C:cytoskeleton"/>
    <property type="evidence" value="ECO:0007669"/>
    <property type="project" value="UniProtKB-SubCell"/>
</dbReference>
<dbReference type="GO" id="GO:0031143">
    <property type="term" value="C:pseudopodium"/>
    <property type="evidence" value="ECO:0007669"/>
    <property type="project" value="UniProtKB-SubCell"/>
</dbReference>
<dbReference type="Gene3D" id="2.60.40.10">
    <property type="entry name" value="Immunoglobulins"/>
    <property type="match status" value="1"/>
</dbReference>
<dbReference type="InterPro" id="IPR013783">
    <property type="entry name" value="Ig-like_fold"/>
</dbReference>
<dbReference type="InterPro" id="IPR000535">
    <property type="entry name" value="MSP_dom"/>
</dbReference>
<dbReference type="InterPro" id="IPR051155">
    <property type="entry name" value="Nematode_MSP"/>
</dbReference>
<dbReference type="InterPro" id="IPR008962">
    <property type="entry name" value="PapD-like_sf"/>
</dbReference>
<dbReference type="PANTHER" id="PTHR22920">
    <property type="entry name" value="MAJOR SPERM PROTEIN"/>
    <property type="match status" value="1"/>
</dbReference>
<dbReference type="PANTHER" id="PTHR22920:SF7">
    <property type="entry name" value="MSP DOMAIN-CONTAINING PROTEIN-RELATED"/>
    <property type="match status" value="1"/>
</dbReference>
<dbReference type="Pfam" id="PF00635">
    <property type="entry name" value="Motile_Sperm"/>
    <property type="match status" value="1"/>
</dbReference>
<dbReference type="SUPFAM" id="SSF49354">
    <property type="entry name" value="PapD-like"/>
    <property type="match status" value="1"/>
</dbReference>
<dbReference type="PROSITE" id="PS50202">
    <property type="entry name" value="MSP"/>
    <property type="match status" value="1"/>
</dbReference>